<feature type="chain" id="PRO_0000314637" description="Putative mandelonitrile lyase">
    <location>
        <begin position="1" status="less than"/>
        <end position="8" status="greater than"/>
    </location>
</feature>
<feature type="non-terminal residue" evidence="2">
    <location>
        <position position="1"/>
    </location>
</feature>
<feature type="non-terminal residue" evidence="2">
    <location>
        <position position="8"/>
    </location>
</feature>
<dbReference type="GO" id="GO:0005576">
    <property type="term" value="C:extracellular region"/>
    <property type="evidence" value="ECO:0007669"/>
    <property type="project" value="UniProtKB-KW"/>
</dbReference>
<organism>
    <name type="scientific">Taxus baccata</name>
    <name type="common">English yew</name>
    <dbReference type="NCBI Taxonomy" id="25629"/>
    <lineage>
        <taxon>Eukaryota</taxon>
        <taxon>Viridiplantae</taxon>
        <taxon>Streptophyta</taxon>
        <taxon>Embryophyta</taxon>
        <taxon>Tracheophyta</taxon>
        <taxon>Spermatophyta</taxon>
        <taxon>Pinopsida</taxon>
        <taxon>Pinidae</taxon>
        <taxon>Conifers II</taxon>
        <taxon>Cupressales</taxon>
        <taxon>Taxaceae</taxon>
        <taxon>Taxus</taxon>
    </lineage>
</organism>
<sequence length="8" mass="896">HTAADLLR</sequence>
<proteinExistence type="evidence at protein level"/>
<reference evidence="3" key="1">
    <citation type="journal article" date="2009" name="J. Plant Physiol.">
        <title>Analysis of the soluble cell wall proteome of gymnosperms.</title>
        <authorList>
            <person name="Uzal E.N."/>
            <person name="Gomez-Ros L.V."/>
            <person name="Hernandez J.A."/>
            <person name="Pedreno M.A."/>
            <person name="Cuello J."/>
            <person name="Ros Barcelo A."/>
        </authorList>
    </citation>
    <scope>PROTEIN SEQUENCE</scope>
    <scope>SUBCELLULAR LOCATION</scope>
    <source>
        <strain evidence="1">PC-1008</strain>
        <tissue evidence="1">Callus</tissue>
    </source>
</reference>
<evidence type="ECO:0000269" key="1">
    <source>
    </source>
</evidence>
<evidence type="ECO:0000303" key="2">
    <source>
    </source>
</evidence>
<evidence type="ECO:0000305" key="3"/>
<comment type="subcellular location">
    <subcellularLocation>
        <location evidence="1">Secreted</location>
        <location evidence="1">Cell wall</location>
    </subcellularLocation>
</comment>
<protein>
    <recommendedName>
        <fullName>Putative mandelonitrile lyase</fullName>
    </recommendedName>
</protein>
<keyword id="KW-0134">Cell wall</keyword>
<keyword id="KW-0903">Direct protein sequencing</keyword>
<keyword id="KW-0964">Secreted</keyword>
<accession>P85342</accession>
<name>MDL_TAXBA</name>